<name>SV2B_HUMAN</name>
<comment type="function">
    <text evidence="1">Probably plays a role in the control of regulated secretion in neural and endocrine cells.</text>
</comment>
<comment type="function">
    <text evidence="6 9">(Microbial infection) Receptor for the C.botulinum neurotoxin type A2 (BoNT/A, botA); glycosylation is not essential but enhances the interaction (PubMed:29649119). Probably also serves as a receptor for the closely related C.botulinum neurotoxin type A1.</text>
</comment>
<comment type="subunit">
    <text evidence="1">Interacts with SYT1 in a calcium-independent manner. Forms a complex with SYT1, syntaxin-1 and SNAP25 (By similarity).</text>
</comment>
<comment type="subunit">
    <text evidence="9">(Microbial infection) Interacts with C.botulinum neurotoxin type A2 (BoNT/A, botA) (PubMed:29649119). Interaction is improved by glycosylation of SV2 (PubMed:29649119).</text>
</comment>
<comment type="interaction">
    <interactant intactId="EBI-10290607">
        <id>Q7L1I2</id>
    </interactant>
    <interactant intactId="EBI-3957665">
        <id>Q96LI6</id>
        <label>HSFY2</label>
    </interactant>
    <organismsDiffer>false</organismsDiffer>
    <experiments>3</experiments>
</comment>
<comment type="subcellular location">
    <subcellularLocation>
        <location evidence="2">Cytoplasmic vesicle</location>
        <location evidence="2">Secretory vesicle</location>
        <location evidence="2">Synaptic vesicle membrane</location>
        <topology evidence="4">Multi-pass membrane protein</topology>
    </subcellularLocation>
    <subcellularLocation>
        <location evidence="2">Cytoplasmic vesicle</location>
        <location evidence="2">Secretory vesicle</location>
        <location evidence="2">Acrosome</location>
    </subcellularLocation>
    <text evidence="2">Associated with synaptic-like microvesicles but not with insulin-containing vesicles in insulin-secreting cells of the pancreas (By similarity). Localizes to microvesicles in the pinealocytes. Localizes to the acrosome in spermatids (By similarity).</text>
</comment>
<comment type="alternative products">
    <event type="alternative splicing"/>
    <isoform>
        <id>Q7L1I2-1</id>
        <name>1</name>
        <sequence type="displayed"/>
    </isoform>
    <isoform>
        <id>Q7L1I2-2</id>
        <name>2</name>
        <sequence type="described" ref="VSP_045194"/>
    </isoform>
</comment>
<comment type="PTM">
    <text evidence="1">N-glycosylated.</text>
</comment>
<comment type="PTM">
    <text evidence="1">The N-terminal cytoplasmic domain is phosphorylated by CK1.</text>
</comment>
<comment type="similarity">
    <text evidence="8">Belongs to the major facilitator superfamily.</text>
</comment>
<comment type="sequence caution" evidence="8">
    <conflict type="erroneous initiation">
        <sequence resource="EMBL-CDS" id="BAA34455"/>
    </conflict>
    <text>Extended N-terminus.</text>
</comment>
<reference key="1">
    <citation type="journal article" date="1998" name="DNA Res.">
        <title>Prediction of the coding sequences of unidentified human genes. XI. The complete sequences of 100 new cDNA clones from brain which code for large proteins in vitro.</title>
        <authorList>
            <person name="Nagase T."/>
            <person name="Ishikawa K."/>
            <person name="Suyama M."/>
            <person name="Kikuno R."/>
            <person name="Miyajima N."/>
            <person name="Tanaka A."/>
            <person name="Kotani H."/>
            <person name="Nomura N."/>
            <person name="Ohara O."/>
        </authorList>
    </citation>
    <scope>NUCLEOTIDE SEQUENCE [LARGE SCALE MRNA] (ISOFORM 1)</scope>
    <source>
        <tissue>Brain</tissue>
    </source>
</reference>
<reference key="2">
    <citation type="submission" date="2004-01" db="EMBL/GenBank/DDBJ databases">
        <authorList>
            <person name="Ohara O."/>
            <person name="Suyama M."/>
            <person name="Nagase T."/>
            <person name="Ishikawa K."/>
            <person name="Kikuno R."/>
        </authorList>
    </citation>
    <scope>SEQUENCE REVISION</scope>
</reference>
<reference key="3">
    <citation type="submission" date="2004-06" db="EMBL/GenBank/DDBJ databases">
        <title>Cloning of human full open reading frames in Gateway(TM) system entry vector (pDONR201).</title>
        <authorList>
            <person name="Ebert L."/>
            <person name="Schick M."/>
            <person name="Neubert P."/>
            <person name="Schatten R."/>
            <person name="Henze S."/>
            <person name="Korn B."/>
        </authorList>
    </citation>
    <scope>NUCLEOTIDE SEQUENCE [LARGE SCALE MRNA] (ISOFORM 1)</scope>
</reference>
<reference key="4">
    <citation type="journal article" date="2004" name="Nat. Genet.">
        <title>Complete sequencing and characterization of 21,243 full-length human cDNAs.</title>
        <authorList>
            <person name="Ota T."/>
            <person name="Suzuki Y."/>
            <person name="Nishikawa T."/>
            <person name="Otsuki T."/>
            <person name="Sugiyama T."/>
            <person name="Irie R."/>
            <person name="Wakamatsu A."/>
            <person name="Hayashi K."/>
            <person name="Sato H."/>
            <person name="Nagai K."/>
            <person name="Kimura K."/>
            <person name="Makita H."/>
            <person name="Sekine M."/>
            <person name="Obayashi M."/>
            <person name="Nishi T."/>
            <person name="Shibahara T."/>
            <person name="Tanaka T."/>
            <person name="Ishii S."/>
            <person name="Yamamoto J."/>
            <person name="Saito K."/>
            <person name="Kawai Y."/>
            <person name="Isono Y."/>
            <person name="Nakamura Y."/>
            <person name="Nagahari K."/>
            <person name="Murakami K."/>
            <person name="Yasuda T."/>
            <person name="Iwayanagi T."/>
            <person name="Wagatsuma M."/>
            <person name="Shiratori A."/>
            <person name="Sudo H."/>
            <person name="Hosoiri T."/>
            <person name="Kaku Y."/>
            <person name="Kodaira H."/>
            <person name="Kondo H."/>
            <person name="Sugawara M."/>
            <person name="Takahashi M."/>
            <person name="Kanda K."/>
            <person name="Yokoi T."/>
            <person name="Furuya T."/>
            <person name="Kikkawa E."/>
            <person name="Omura Y."/>
            <person name="Abe K."/>
            <person name="Kamihara K."/>
            <person name="Katsuta N."/>
            <person name="Sato K."/>
            <person name="Tanikawa M."/>
            <person name="Yamazaki M."/>
            <person name="Ninomiya K."/>
            <person name="Ishibashi T."/>
            <person name="Yamashita H."/>
            <person name="Murakawa K."/>
            <person name="Fujimori K."/>
            <person name="Tanai H."/>
            <person name="Kimata M."/>
            <person name="Watanabe M."/>
            <person name="Hiraoka S."/>
            <person name="Chiba Y."/>
            <person name="Ishida S."/>
            <person name="Ono Y."/>
            <person name="Takiguchi S."/>
            <person name="Watanabe S."/>
            <person name="Yosida M."/>
            <person name="Hotuta T."/>
            <person name="Kusano J."/>
            <person name="Kanehori K."/>
            <person name="Takahashi-Fujii A."/>
            <person name="Hara H."/>
            <person name="Tanase T.-O."/>
            <person name="Nomura Y."/>
            <person name="Togiya S."/>
            <person name="Komai F."/>
            <person name="Hara R."/>
            <person name="Takeuchi K."/>
            <person name="Arita M."/>
            <person name="Imose N."/>
            <person name="Musashino K."/>
            <person name="Yuuki H."/>
            <person name="Oshima A."/>
            <person name="Sasaki N."/>
            <person name="Aotsuka S."/>
            <person name="Yoshikawa Y."/>
            <person name="Matsunawa H."/>
            <person name="Ichihara T."/>
            <person name="Shiohata N."/>
            <person name="Sano S."/>
            <person name="Moriya S."/>
            <person name="Momiyama H."/>
            <person name="Satoh N."/>
            <person name="Takami S."/>
            <person name="Terashima Y."/>
            <person name="Suzuki O."/>
            <person name="Nakagawa S."/>
            <person name="Senoh A."/>
            <person name="Mizoguchi H."/>
            <person name="Goto Y."/>
            <person name="Shimizu F."/>
            <person name="Wakebe H."/>
            <person name="Hishigaki H."/>
            <person name="Watanabe T."/>
            <person name="Sugiyama A."/>
            <person name="Takemoto M."/>
            <person name="Kawakami B."/>
            <person name="Yamazaki M."/>
            <person name="Watanabe K."/>
            <person name="Kumagai A."/>
            <person name="Itakura S."/>
            <person name="Fukuzumi Y."/>
            <person name="Fujimori Y."/>
            <person name="Komiyama M."/>
            <person name="Tashiro H."/>
            <person name="Tanigami A."/>
            <person name="Fujiwara T."/>
            <person name="Ono T."/>
            <person name="Yamada K."/>
            <person name="Fujii Y."/>
            <person name="Ozaki K."/>
            <person name="Hirao M."/>
            <person name="Ohmori Y."/>
            <person name="Kawabata A."/>
            <person name="Hikiji T."/>
            <person name="Kobatake N."/>
            <person name="Inagaki H."/>
            <person name="Ikema Y."/>
            <person name="Okamoto S."/>
            <person name="Okitani R."/>
            <person name="Kawakami T."/>
            <person name="Noguchi S."/>
            <person name="Itoh T."/>
            <person name="Shigeta K."/>
            <person name="Senba T."/>
            <person name="Matsumura K."/>
            <person name="Nakajima Y."/>
            <person name="Mizuno T."/>
            <person name="Morinaga M."/>
            <person name="Sasaki M."/>
            <person name="Togashi T."/>
            <person name="Oyama M."/>
            <person name="Hata H."/>
            <person name="Watanabe M."/>
            <person name="Komatsu T."/>
            <person name="Mizushima-Sugano J."/>
            <person name="Satoh T."/>
            <person name="Shirai Y."/>
            <person name="Takahashi Y."/>
            <person name="Nakagawa K."/>
            <person name="Okumura K."/>
            <person name="Nagase T."/>
            <person name="Nomura N."/>
            <person name="Kikuchi H."/>
            <person name="Masuho Y."/>
            <person name="Yamashita R."/>
            <person name="Nakai K."/>
            <person name="Yada T."/>
            <person name="Nakamura Y."/>
            <person name="Ohara O."/>
            <person name="Isogai T."/>
            <person name="Sugano S."/>
        </authorList>
    </citation>
    <scope>NUCLEOTIDE SEQUENCE [LARGE SCALE MRNA] (ISOFORM 2)</scope>
    <source>
        <tissue>Brain</tissue>
    </source>
</reference>
<reference key="5">
    <citation type="submission" date="2008-12" db="EMBL/GenBank/DDBJ databases">
        <authorList>
            <consortium name="NHLBI resequencing and genotyping service (RS&amp;G)"/>
        </authorList>
    </citation>
    <scope>NUCLEOTIDE SEQUENCE [GENOMIC DNA]</scope>
</reference>
<reference key="6">
    <citation type="journal article" date="2006" name="Nature">
        <title>Analysis of the DNA sequence and duplication history of human chromosome 15.</title>
        <authorList>
            <person name="Zody M.C."/>
            <person name="Garber M."/>
            <person name="Sharpe T."/>
            <person name="Young S.K."/>
            <person name="Rowen L."/>
            <person name="O'Neill K."/>
            <person name="Whittaker C.A."/>
            <person name="Kamal M."/>
            <person name="Chang J.L."/>
            <person name="Cuomo C.A."/>
            <person name="Dewar K."/>
            <person name="FitzGerald M.G."/>
            <person name="Kodira C.D."/>
            <person name="Madan A."/>
            <person name="Qin S."/>
            <person name="Yang X."/>
            <person name="Abbasi N."/>
            <person name="Abouelleil A."/>
            <person name="Arachchi H.M."/>
            <person name="Baradarani L."/>
            <person name="Birditt B."/>
            <person name="Bloom S."/>
            <person name="Bloom T."/>
            <person name="Borowsky M.L."/>
            <person name="Burke J."/>
            <person name="Butler J."/>
            <person name="Cook A."/>
            <person name="DeArellano K."/>
            <person name="DeCaprio D."/>
            <person name="Dorris L. III"/>
            <person name="Dors M."/>
            <person name="Eichler E.E."/>
            <person name="Engels R."/>
            <person name="Fahey J."/>
            <person name="Fleetwood P."/>
            <person name="Friedman C."/>
            <person name="Gearin G."/>
            <person name="Hall J.L."/>
            <person name="Hensley G."/>
            <person name="Johnson E."/>
            <person name="Jones C."/>
            <person name="Kamat A."/>
            <person name="Kaur A."/>
            <person name="Locke D.P."/>
            <person name="Madan A."/>
            <person name="Munson G."/>
            <person name="Jaffe D.B."/>
            <person name="Lui A."/>
            <person name="Macdonald P."/>
            <person name="Mauceli E."/>
            <person name="Naylor J.W."/>
            <person name="Nesbitt R."/>
            <person name="Nicol R."/>
            <person name="O'Leary S.B."/>
            <person name="Ratcliffe A."/>
            <person name="Rounsley S."/>
            <person name="She X."/>
            <person name="Sneddon K.M.B."/>
            <person name="Stewart S."/>
            <person name="Sougnez C."/>
            <person name="Stone S.M."/>
            <person name="Topham K."/>
            <person name="Vincent D."/>
            <person name="Wang S."/>
            <person name="Zimmer A.R."/>
            <person name="Birren B.W."/>
            <person name="Hood L."/>
            <person name="Lander E.S."/>
            <person name="Nusbaum C."/>
        </authorList>
    </citation>
    <scope>NUCLEOTIDE SEQUENCE [LARGE SCALE GENOMIC DNA]</scope>
</reference>
<reference key="7">
    <citation type="submission" date="2005-07" db="EMBL/GenBank/DDBJ databases">
        <authorList>
            <person name="Mural R.J."/>
            <person name="Istrail S."/>
            <person name="Sutton G.G."/>
            <person name="Florea L."/>
            <person name="Halpern A.L."/>
            <person name="Mobarry C.M."/>
            <person name="Lippert R."/>
            <person name="Walenz B."/>
            <person name="Shatkay H."/>
            <person name="Dew I."/>
            <person name="Miller J.R."/>
            <person name="Flanigan M.J."/>
            <person name="Edwards N.J."/>
            <person name="Bolanos R."/>
            <person name="Fasulo D."/>
            <person name="Halldorsson B.V."/>
            <person name="Hannenhalli S."/>
            <person name="Turner R."/>
            <person name="Yooseph S."/>
            <person name="Lu F."/>
            <person name="Nusskern D.R."/>
            <person name="Shue B.C."/>
            <person name="Zheng X.H."/>
            <person name="Zhong F."/>
            <person name="Delcher A.L."/>
            <person name="Huson D.H."/>
            <person name="Kravitz S.A."/>
            <person name="Mouchard L."/>
            <person name="Reinert K."/>
            <person name="Remington K.A."/>
            <person name="Clark A.G."/>
            <person name="Waterman M.S."/>
            <person name="Eichler E.E."/>
            <person name="Adams M.D."/>
            <person name="Hunkapiller M.W."/>
            <person name="Myers E.W."/>
            <person name="Venter J.C."/>
        </authorList>
    </citation>
    <scope>NUCLEOTIDE SEQUENCE [LARGE SCALE GENOMIC DNA]</scope>
</reference>
<reference key="8">
    <citation type="journal article" date="2004" name="Genome Res.">
        <title>The status, quality, and expansion of the NIH full-length cDNA project: the Mammalian Gene Collection (MGC).</title>
        <authorList>
            <consortium name="The MGC Project Team"/>
        </authorList>
    </citation>
    <scope>NUCLEOTIDE SEQUENCE [LARGE SCALE MRNA] (ISOFORM 1)</scope>
    <source>
        <tissue>Testis</tissue>
    </source>
</reference>
<reference key="9">
    <citation type="journal article" date="2018" name="Toxins">
        <title>Crystal structure of botulinum neurotoxin A2 in complex with the human protein receptor SV2C reveals plasticity in receptor binding.</title>
        <authorList>
            <person name="Gustafsson R."/>
            <person name="Zhang S."/>
            <person name="Masuyer G."/>
            <person name="Dong M."/>
            <person name="Stenmark P."/>
        </authorList>
    </citation>
    <scope>FUNCTION AS C.BOTULINUM NEUROTOXIN TYPE A2 RECEPTOR (MICROBIAL INFECTION)</scope>
    <scope>SUBUNIT (MICROBIAL INFECTION)</scope>
</reference>
<dbReference type="EMBL" id="AB018278">
    <property type="protein sequence ID" value="BAA34455.2"/>
    <property type="status" value="ALT_INIT"/>
    <property type="molecule type" value="mRNA"/>
</dbReference>
<dbReference type="EMBL" id="CR457086">
    <property type="protein sequence ID" value="CAG33367.1"/>
    <property type="molecule type" value="mRNA"/>
</dbReference>
<dbReference type="EMBL" id="AK294902">
    <property type="protein sequence ID" value="BAG57991.1"/>
    <property type="molecule type" value="mRNA"/>
</dbReference>
<dbReference type="EMBL" id="FJ515843">
    <property type="protein sequence ID" value="ACS13737.1"/>
    <property type="molecule type" value="Genomic_DNA"/>
</dbReference>
<dbReference type="EMBL" id="AC123784">
    <property type="status" value="NOT_ANNOTATED_CDS"/>
    <property type="molecule type" value="Genomic_DNA"/>
</dbReference>
<dbReference type="EMBL" id="AC127520">
    <property type="status" value="NOT_ANNOTATED_CDS"/>
    <property type="molecule type" value="Genomic_DNA"/>
</dbReference>
<dbReference type="EMBL" id="CH471101">
    <property type="protein sequence ID" value="EAX02143.1"/>
    <property type="molecule type" value="Genomic_DNA"/>
</dbReference>
<dbReference type="EMBL" id="BC030011">
    <property type="protein sequence ID" value="AAH30011.1"/>
    <property type="molecule type" value="mRNA"/>
</dbReference>
<dbReference type="CCDS" id="CCDS10370.1">
    <molecule id="Q7L1I2-1"/>
</dbReference>
<dbReference type="CCDS" id="CCDS53972.1">
    <molecule id="Q7L1I2-2"/>
</dbReference>
<dbReference type="RefSeq" id="NP_001161052.1">
    <molecule id="Q7L1I2-2"/>
    <property type="nucleotide sequence ID" value="NM_001167580.3"/>
</dbReference>
<dbReference type="RefSeq" id="NP_001309960.1">
    <molecule id="Q7L1I2-1"/>
    <property type="nucleotide sequence ID" value="NM_001323031.2"/>
</dbReference>
<dbReference type="RefSeq" id="NP_001309961.1">
    <molecule id="Q7L1I2-1"/>
    <property type="nucleotide sequence ID" value="NM_001323032.3"/>
</dbReference>
<dbReference type="RefSeq" id="NP_001309966.1">
    <molecule id="Q7L1I2-1"/>
    <property type="nucleotide sequence ID" value="NM_001323037.3"/>
</dbReference>
<dbReference type="RefSeq" id="NP_001309967.1">
    <molecule id="Q7L1I2-1"/>
    <property type="nucleotide sequence ID" value="NM_001323038.3"/>
</dbReference>
<dbReference type="RefSeq" id="NP_001309968.1">
    <molecule id="Q7L1I2-1"/>
    <property type="nucleotide sequence ID" value="NM_001323039.3"/>
</dbReference>
<dbReference type="RefSeq" id="NP_001309969.1">
    <molecule id="Q7L1I2-2"/>
    <property type="nucleotide sequence ID" value="NM_001323040.3"/>
</dbReference>
<dbReference type="RefSeq" id="NP_055663.1">
    <molecule id="Q7L1I2-1"/>
    <property type="nucleotide sequence ID" value="NM_014848.7"/>
</dbReference>
<dbReference type="RefSeq" id="XP_005255055.1">
    <molecule id="Q7L1I2-1"/>
    <property type="nucleotide sequence ID" value="XM_005254998.4"/>
</dbReference>
<dbReference type="RefSeq" id="XP_016878250.1">
    <molecule id="Q7L1I2-1"/>
    <property type="nucleotide sequence ID" value="XM_017022761.2"/>
</dbReference>
<dbReference type="RefSeq" id="XP_016878251.1">
    <molecule id="Q7L1I2-1"/>
    <property type="nucleotide sequence ID" value="XM_017022762.2"/>
</dbReference>
<dbReference type="RefSeq" id="XP_047289348.1">
    <molecule id="Q7L1I2-1"/>
    <property type="nucleotide sequence ID" value="XM_047433392.1"/>
</dbReference>
<dbReference type="RefSeq" id="XP_054235267.1">
    <molecule id="Q7L1I2-1"/>
    <property type="nucleotide sequence ID" value="XM_054379292.1"/>
</dbReference>
<dbReference type="RefSeq" id="XP_054235268.1">
    <molecule id="Q7L1I2-1"/>
    <property type="nucleotide sequence ID" value="XM_054379293.1"/>
</dbReference>
<dbReference type="RefSeq" id="XP_054235269.1">
    <molecule id="Q7L1I2-1"/>
    <property type="nucleotide sequence ID" value="XM_054379294.1"/>
</dbReference>
<dbReference type="RefSeq" id="XP_054235270.1">
    <molecule id="Q7L1I2-1"/>
    <property type="nucleotide sequence ID" value="XM_054379295.1"/>
</dbReference>
<dbReference type="RefSeq" id="XP_054235271.1">
    <molecule id="Q7L1I2-1"/>
    <property type="nucleotide sequence ID" value="XM_054379296.1"/>
</dbReference>
<dbReference type="PDB" id="8UO8">
    <property type="method" value="EM"/>
    <property type="resolution" value="3.20 A"/>
    <property type="chains" value="A=1-683"/>
</dbReference>
<dbReference type="PDB" id="9F1R">
    <property type="method" value="EM"/>
    <property type="resolution" value="3.67 A"/>
    <property type="chains" value="A=1-683"/>
</dbReference>
<dbReference type="PDB" id="9F2B">
    <property type="method" value="EM"/>
    <property type="resolution" value="3.49 A"/>
    <property type="chains" value="A=1-683"/>
</dbReference>
<dbReference type="PDB" id="9F2J">
    <property type="method" value="EM"/>
    <property type="resolution" value="3.98 A"/>
    <property type="chains" value="A=1-683"/>
</dbReference>
<dbReference type="PDB" id="9F2Y">
    <property type="method" value="EM"/>
    <property type="resolution" value="4.39 A"/>
    <property type="chains" value="A=1-683"/>
</dbReference>
<dbReference type="PDB" id="9F3C">
    <property type="method" value="EM"/>
    <property type="resolution" value="5.41 A"/>
    <property type="chains" value="A=1-683"/>
</dbReference>
<dbReference type="PDBsum" id="8UO8"/>
<dbReference type="PDBsum" id="9F1R"/>
<dbReference type="PDBsum" id="9F2B"/>
<dbReference type="PDBsum" id="9F2J"/>
<dbReference type="PDBsum" id="9F2Y"/>
<dbReference type="PDBsum" id="9F3C"/>
<dbReference type="EMDB" id="EMD-42430"/>
<dbReference type="EMDB" id="EMD-50135"/>
<dbReference type="EMDB" id="EMD-50146"/>
<dbReference type="EMDB" id="EMD-50147"/>
<dbReference type="EMDB" id="EMD-50151"/>
<dbReference type="EMDB" id="EMD-50158"/>
<dbReference type="EMDB" id="EMD-50166"/>
<dbReference type="SMR" id="Q7L1I2"/>
<dbReference type="BioGRID" id="115228">
    <property type="interactions" value="7"/>
</dbReference>
<dbReference type="FunCoup" id="Q7L1I2">
    <property type="interactions" value="515"/>
</dbReference>
<dbReference type="IntAct" id="Q7L1I2">
    <property type="interactions" value="3"/>
</dbReference>
<dbReference type="STRING" id="9606.ENSP00000377779"/>
<dbReference type="ChEMBL" id="CHEMBL4665594"/>
<dbReference type="TCDB" id="2.A.1.22.7">
    <property type="family name" value="the major facilitator superfamily (mfs)"/>
</dbReference>
<dbReference type="GlyCosmos" id="Q7L1I2">
    <property type="glycosylation" value="3 sites, No reported glycans"/>
</dbReference>
<dbReference type="GlyGen" id="Q7L1I2">
    <property type="glycosylation" value="3 sites"/>
</dbReference>
<dbReference type="iPTMnet" id="Q7L1I2"/>
<dbReference type="PhosphoSitePlus" id="Q7L1I2"/>
<dbReference type="SwissPalm" id="Q7L1I2"/>
<dbReference type="BioMuta" id="SV2B"/>
<dbReference type="DMDM" id="74738530"/>
<dbReference type="MassIVE" id="Q7L1I2"/>
<dbReference type="PaxDb" id="9606-ENSP00000377779"/>
<dbReference type="PeptideAtlas" id="Q7L1I2"/>
<dbReference type="ProteomicsDB" id="4186"/>
<dbReference type="ProteomicsDB" id="68743">
    <molecule id="Q7L1I2-1"/>
</dbReference>
<dbReference type="Antibodypedia" id="29003">
    <property type="antibodies" value="144 antibodies from 25 providers"/>
</dbReference>
<dbReference type="DNASU" id="9899"/>
<dbReference type="Ensembl" id="ENST00000330276.4">
    <molecule id="Q7L1I2-1"/>
    <property type="protein sequence ID" value="ENSP00000332818.4"/>
    <property type="gene ID" value="ENSG00000185518.12"/>
</dbReference>
<dbReference type="Ensembl" id="ENST00000394232.6">
    <molecule id="Q7L1I2-1"/>
    <property type="protein sequence ID" value="ENSP00000377779.1"/>
    <property type="gene ID" value="ENSG00000185518.12"/>
</dbReference>
<dbReference type="Ensembl" id="ENST00000545111.6">
    <molecule id="Q7L1I2-2"/>
    <property type="protein sequence ID" value="ENSP00000443243.2"/>
    <property type="gene ID" value="ENSG00000185518.12"/>
</dbReference>
<dbReference type="Ensembl" id="ENST00000557410.5">
    <molecule id="Q7L1I2-1"/>
    <property type="protein sequence ID" value="ENSP00000450992.1"/>
    <property type="gene ID" value="ENSG00000185518.12"/>
</dbReference>
<dbReference type="GeneID" id="9899"/>
<dbReference type="KEGG" id="hsa:9899"/>
<dbReference type="MANE-Select" id="ENST00000394232.6">
    <property type="protein sequence ID" value="ENSP00000377779.1"/>
    <property type="RefSeq nucleotide sequence ID" value="NM_001323032.3"/>
    <property type="RefSeq protein sequence ID" value="NP_001309961.1"/>
</dbReference>
<dbReference type="UCSC" id="uc010uqv.3">
    <molecule id="Q7L1I2-1"/>
    <property type="organism name" value="human"/>
</dbReference>
<dbReference type="AGR" id="HGNC:16874"/>
<dbReference type="CTD" id="9899"/>
<dbReference type="DisGeNET" id="9899"/>
<dbReference type="GeneCards" id="SV2B"/>
<dbReference type="HGNC" id="HGNC:16874">
    <property type="gene designation" value="SV2B"/>
</dbReference>
<dbReference type="HPA" id="ENSG00000185518">
    <property type="expression patterns" value="Group enriched (brain, retina)"/>
</dbReference>
<dbReference type="MalaCards" id="SV2B"/>
<dbReference type="MIM" id="185861">
    <property type="type" value="gene"/>
</dbReference>
<dbReference type="neXtProt" id="NX_Q7L1I2"/>
<dbReference type="OpenTargets" id="ENSG00000185518"/>
<dbReference type="PharmGKB" id="PA134930999"/>
<dbReference type="VEuPathDB" id="HostDB:ENSG00000185518"/>
<dbReference type="eggNOG" id="KOG0255">
    <property type="taxonomic scope" value="Eukaryota"/>
</dbReference>
<dbReference type="GeneTree" id="ENSGT00950000182940"/>
<dbReference type="HOGENOM" id="CLU_001265_46_15_1"/>
<dbReference type="InParanoid" id="Q7L1I2"/>
<dbReference type="OMA" id="LKQVWDN"/>
<dbReference type="OrthoDB" id="433512at2759"/>
<dbReference type="PAN-GO" id="Q7L1I2">
    <property type="GO annotations" value="3 GO annotations based on evolutionary models"/>
</dbReference>
<dbReference type="PhylomeDB" id="Q7L1I2"/>
<dbReference type="TreeFam" id="TF324824"/>
<dbReference type="PathwayCommons" id="Q7L1I2"/>
<dbReference type="Reactome" id="R-HSA-5250955">
    <property type="pathway name" value="Toxicity of botulinum toxin type D (botD)"/>
</dbReference>
<dbReference type="Reactome" id="R-HSA-5250968">
    <property type="pathway name" value="Toxicity of botulinum toxin type A (botA)"/>
</dbReference>
<dbReference type="Reactome" id="R-HSA-5250981">
    <property type="pathway name" value="Toxicity of botulinum toxin type F (botF)"/>
</dbReference>
<dbReference type="Reactome" id="R-HSA-5250992">
    <property type="pathway name" value="Toxicity of botulinum toxin type E (botE)"/>
</dbReference>
<dbReference type="SignaLink" id="Q7L1I2"/>
<dbReference type="BioGRID-ORCS" id="9899">
    <property type="hits" value="9 hits in 1148 CRISPR screens"/>
</dbReference>
<dbReference type="ChiTaRS" id="SV2B">
    <property type="organism name" value="human"/>
</dbReference>
<dbReference type="GeneWiki" id="SV2B"/>
<dbReference type="GenomeRNAi" id="9899"/>
<dbReference type="Pharos" id="Q7L1I2">
    <property type="development level" value="Tbio"/>
</dbReference>
<dbReference type="PRO" id="PR:Q7L1I2"/>
<dbReference type="Proteomes" id="UP000005640">
    <property type="component" value="Chromosome 15"/>
</dbReference>
<dbReference type="RNAct" id="Q7L1I2">
    <property type="molecule type" value="protein"/>
</dbReference>
<dbReference type="Bgee" id="ENSG00000185518">
    <property type="expression patterns" value="Expressed in middle temporal gyrus and 140 other cell types or tissues"/>
</dbReference>
<dbReference type="GO" id="GO:0001669">
    <property type="term" value="C:acrosomal vesicle"/>
    <property type="evidence" value="ECO:0007669"/>
    <property type="project" value="UniProtKB-SubCell"/>
</dbReference>
<dbReference type="GO" id="GO:0016020">
    <property type="term" value="C:membrane"/>
    <property type="evidence" value="ECO:0000250"/>
    <property type="project" value="ParkinsonsUK-UCL"/>
</dbReference>
<dbReference type="GO" id="GO:0005886">
    <property type="term" value="C:plasma membrane"/>
    <property type="evidence" value="ECO:0000304"/>
    <property type="project" value="Reactome"/>
</dbReference>
<dbReference type="GO" id="GO:0008021">
    <property type="term" value="C:synaptic vesicle"/>
    <property type="evidence" value="ECO:0000250"/>
    <property type="project" value="ParkinsonsUK-UCL"/>
</dbReference>
<dbReference type="GO" id="GO:0030672">
    <property type="term" value="C:synaptic vesicle membrane"/>
    <property type="evidence" value="ECO:0000318"/>
    <property type="project" value="GO_Central"/>
</dbReference>
<dbReference type="GO" id="GO:0022857">
    <property type="term" value="F:transmembrane transporter activity"/>
    <property type="evidence" value="ECO:0007669"/>
    <property type="project" value="InterPro"/>
</dbReference>
<dbReference type="GO" id="GO:0007268">
    <property type="term" value="P:chemical synaptic transmission"/>
    <property type="evidence" value="ECO:0007669"/>
    <property type="project" value="InterPro"/>
</dbReference>
<dbReference type="GO" id="GO:0006836">
    <property type="term" value="P:neurotransmitter transport"/>
    <property type="evidence" value="ECO:0007669"/>
    <property type="project" value="UniProtKB-KW"/>
</dbReference>
<dbReference type="GO" id="GO:0099509">
    <property type="term" value="P:regulation of presynaptic cytosolic calcium ion concentration"/>
    <property type="evidence" value="ECO:0007669"/>
    <property type="project" value="Ensembl"/>
</dbReference>
<dbReference type="GO" id="GO:2000300">
    <property type="term" value="P:regulation of synaptic vesicle exocytosis"/>
    <property type="evidence" value="ECO:0007669"/>
    <property type="project" value="Ensembl"/>
</dbReference>
<dbReference type="CDD" id="cd17438">
    <property type="entry name" value="MFS_SV2B"/>
    <property type="match status" value="1"/>
</dbReference>
<dbReference type="FunFam" id="1.20.1250.20:FF:000009">
    <property type="entry name" value="Synaptic vesicle glycoprotein 2A"/>
    <property type="match status" value="1"/>
</dbReference>
<dbReference type="FunFam" id="2.160.20.80:FF:000001">
    <property type="entry name" value="Synaptic vesicle glycoprotein 2A"/>
    <property type="match status" value="1"/>
</dbReference>
<dbReference type="FunFam" id="1.20.1250.20:FF:000014">
    <property type="entry name" value="synaptic vesicle glycoprotein 2A"/>
    <property type="match status" value="1"/>
</dbReference>
<dbReference type="Gene3D" id="2.160.20.80">
    <property type="entry name" value="E3 ubiquitin-protein ligase SopA"/>
    <property type="match status" value="1"/>
</dbReference>
<dbReference type="Gene3D" id="1.20.1250.20">
    <property type="entry name" value="MFS general substrate transporter like domains"/>
    <property type="match status" value="2"/>
</dbReference>
<dbReference type="InterPro" id="IPR055415">
    <property type="entry name" value="LD_SV2"/>
</dbReference>
<dbReference type="InterPro" id="IPR011701">
    <property type="entry name" value="MFS"/>
</dbReference>
<dbReference type="InterPro" id="IPR020846">
    <property type="entry name" value="MFS_dom"/>
</dbReference>
<dbReference type="InterPro" id="IPR005828">
    <property type="entry name" value="MFS_sugar_transport-like"/>
</dbReference>
<dbReference type="InterPro" id="IPR036259">
    <property type="entry name" value="MFS_trans_sf"/>
</dbReference>
<dbReference type="InterPro" id="IPR005829">
    <property type="entry name" value="Sugar_transporter_CS"/>
</dbReference>
<dbReference type="InterPro" id="IPR022308">
    <property type="entry name" value="SV2"/>
</dbReference>
<dbReference type="NCBIfam" id="TIGR01299">
    <property type="entry name" value="synapt_SV2"/>
    <property type="match status" value="1"/>
</dbReference>
<dbReference type="PANTHER" id="PTHR23511">
    <property type="entry name" value="SYNAPTIC VESICLE GLYCOPROTEIN 2"/>
    <property type="match status" value="1"/>
</dbReference>
<dbReference type="PANTHER" id="PTHR23511:SF2">
    <property type="entry name" value="SYNAPTIC VESICLE GLYCOPROTEIN 2B"/>
    <property type="match status" value="1"/>
</dbReference>
<dbReference type="Pfam" id="PF23894">
    <property type="entry name" value="LD_SV2"/>
    <property type="match status" value="1"/>
</dbReference>
<dbReference type="Pfam" id="PF07690">
    <property type="entry name" value="MFS_1"/>
    <property type="match status" value="1"/>
</dbReference>
<dbReference type="Pfam" id="PF00083">
    <property type="entry name" value="Sugar_tr"/>
    <property type="match status" value="1"/>
</dbReference>
<dbReference type="SUPFAM" id="SSF103473">
    <property type="entry name" value="MFS general substrate transporter"/>
    <property type="match status" value="2"/>
</dbReference>
<dbReference type="SUPFAM" id="SSF141571">
    <property type="entry name" value="Pentapeptide repeat-like"/>
    <property type="match status" value="1"/>
</dbReference>
<dbReference type="PROSITE" id="PS50850">
    <property type="entry name" value="MFS"/>
    <property type="match status" value="1"/>
</dbReference>
<accession>Q7L1I2</accession>
<accession>B4DH30</accession>
<accession>C6G489</accession>
<accession>O94840</accession>
<accession>Q6IAR8</accession>
<feature type="chain" id="PRO_0000239768" description="Synaptic vesicle glycoprotein 2B">
    <location>
        <begin position="1"/>
        <end position="683"/>
    </location>
</feature>
<feature type="topological domain" description="Cytoplasmic" evidence="4">
    <location>
        <begin position="1"/>
        <end position="108"/>
    </location>
</feature>
<feature type="transmembrane region" description="Helical" evidence="4">
    <location>
        <begin position="109"/>
        <end position="129"/>
    </location>
</feature>
<feature type="topological domain" description="Extracellular" evidence="4">
    <location>
        <begin position="130"/>
        <end position="148"/>
    </location>
</feature>
<feature type="transmembrane region" description="Helical" evidence="4">
    <location>
        <begin position="149"/>
        <end position="169"/>
    </location>
</feature>
<feature type="topological domain" description="Cytoplasmic" evidence="4">
    <location>
        <begin position="170"/>
        <end position="182"/>
    </location>
</feature>
<feature type="transmembrane region" description="Helical" evidence="4">
    <location>
        <begin position="183"/>
        <end position="203"/>
    </location>
</feature>
<feature type="topological domain" description="Extracellular" evidence="4">
    <location>
        <begin position="204"/>
        <end position="205"/>
    </location>
</feature>
<feature type="transmembrane region" description="Helical" evidence="4">
    <location>
        <begin position="206"/>
        <end position="226"/>
    </location>
</feature>
<feature type="topological domain" description="Cytoplasmic" evidence="4">
    <location>
        <begin position="227"/>
        <end position="237"/>
    </location>
</feature>
<feature type="transmembrane region" description="Helical" evidence="4">
    <location>
        <begin position="238"/>
        <end position="258"/>
    </location>
</feature>
<feature type="topological domain" description="Extracellular" evidence="4">
    <location>
        <begin position="259"/>
        <end position="277"/>
    </location>
</feature>
<feature type="transmembrane region" description="Helical" evidence="4">
    <location>
        <begin position="278"/>
        <end position="298"/>
    </location>
</feature>
<feature type="topological domain" description="Cytoplasmic" evidence="4">
    <location>
        <begin position="299"/>
        <end position="390"/>
    </location>
</feature>
<feature type="transmembrane region" description="Helical" evidence="4">
    <location>
        <begin position="391"/>
        <end position="411"/>
    </location>
</feature>
<feature type="topological domain" description="Extracellular" evidence="4">
    <location>
        <begin position="412"/>
        <end position="535"/>
    </location>
</feature>
<feature type="transmembrane region" description="Helical" evidence="4">
    <location>
        <begin position="536"/>
        <end position="556"/>
    </location>
</feature>
<feature type="topological domain" description="Cytoplasmic" evidence="4">
    <location>
        <begin position="557"/>
        <end position="565"/>
    </location>
</feature>
<feature type="transmembrane region" description="Helical" evidence="4">
    <location>
        <begin position="566"/>
        <end position="586"/>
    </location>
</feature>
<feature type="topological domain" description="Extracellular" evidence="4">
    <location>
        <begin position="587"/>
        <end position="592"/>
    </location>
</feature>
<feature type="transmembrane region" description="Helical" evidence="4">
    <location>
        <begin position="593"/>
        <end position="613"/>
    </location>
</feature>
<feature type="topological domain" description="Cytoplasmic" evidence="4">
    <location>
        <begin position="614"/>
        <end position="626"/>
    </location>
</feature>
<feature type="transmembrane region" description="Helical" evidence="4">
    <location>
        <begin position="627"/>
        <end position="649"/>
    </location>
</feature>
<feature type="topological domain" description="Extracellular" evidence="4">
    <location>
        <begin position="650"/>
        <end position="653"/>
    </location>
</feature>
<feature type="transmembrane region" description="Helical" evidence="4">
    <location>
        <begin position="654"/>
        <end position="672"/>
    </location>
</feature>
<feature type="topological domain" description="Cytoplasmic" evidence="4">
    <location>
        <begin position="673"/>
        <end position="683"/>
    </location>
</feature>
<feature type="region of interest" description="Disordered" evidence="5">
    <location>
        <begin position="1"/>
        <end position="42"/>
    </location>
</feature>
<feature type="modified residue" description="Phosphoserine" evidence="3">
    <location>
        <position position="33"/>
    </location>
</feature>
<feature type="modified residue" description="Phosphothreonine" evidence="3">
    <location>
        <position position="36"/>
    </location>
</feature>
<feature type="modified residue" description="Phosphotyrosine" evidence="3">
    <location>
        <position position="423"/>
    </location>
</feature>
<feature type="glycosylation site" description="N-linked (GlcNAc...) asparagine" evidence="4">
    <location>
        <position position="441"/>
    </location>
</feature>
<feature type="glycosylation site" description="N-linked (GlcNAc...) asparagine" evidence="4">
    <location>
        <position position="491"/>
    </location>
</feature>
<feature type="glycosylation site" description="N-linked (GlcNAc...) asparagine" evidence="4">
    <location>
        <position position="516"/>
    </location>
</feature>
<feature type="splice variant" id="VSP_045194" description="In isoform 2." evidence="7">
    <location>
        <begin position="1"/>
        <end position="151"/>
    </location>
</feature>
<feature type="sequence conflict" description="In Ref. 3; CAG33367." evidence="8" ref="3">
    <original>M</original>
    <variation>I</variation>
    <location>
        <position position="683"/>
    </location>
</feature>
<sequence>MDDYKYQDNYGGYAPSDGYYRGNESNPEEDAQSDVTEGHDEEDEIYEGEYQGIPHPDDVKAKQAKMAPSRMDSLRGQTDLMAERLEDEEQLAHQYETIMDECGHGRFQWILFFVLGLALMADGVEVFVVSFALPSAEKDMCLSSSKKGMLGMIVYLGMMAGAFILGGLADKLGRKRVLSMSLAVNASFASLSSFVQGYGAFLFCRLISGIGIGGALPIVFAYFSEFLSREKRGEHLSWLGIFWMTGGLYASAMAWSIIPHYGWGFSMGTNYHFHSWRVFVIVCALPCTVSMVALKFMPESPRFLLEMGKHDEAWMILKQVHDTNMRAKGTPEKVFTVSNIKTPKQMDEFIEIQSSTGTWYQRWLVRFKTIFKQVWDNALYCVMGPYRMNTLILAVVWFAMAFSYYGLTVWFPDMIRYFQDEEYKSKMKVFFGEHVYGATINFTMENQIHQHGKLVNDKFTRMYFKHVLFEDTFFDECYFEDVTSTDTYFKNCTIESTIFYNTDLYEHKFINCRFINSTFLEQKEGCHMDLEQDNDFLIYLVSFLGSLSVLPGNIISALLMDRIGRLKMIGGSMLISAVCCFFLFFGNSESAMIGWQCLFCGTSIAAWNALDVITVELYPTNQRATAFGILNGLCKFGAILGNTIFASFVGITKVVPILLAAASLVGGGLIALRLPETREQVLM</sequence>
<evidence type="ECO:0000250" key="1"/>
<evidence type="ECO:0000250" key="2">
    <source>
        <dbReference type="UniProtKB" id="Q63564"/>
    </source>
</evidence>
<evidence type="ECO:0000250" key="3">
    <source>
        <dbReference type="UniProtKB" id="Q8BG39"/>
    </source>
</evidence>
<evidence type="ECO:0000255" key="4"/>
<evidence type="ECO:0000256" key="5">
    <source>
        <dbReference type="SAM" id="MobiDB-lite"/>
    </source>
</evidence>
<evidence type="ECO:0000269" key="6">
    <source>
    </source>
</evidence>
<evidence type="ECO:0000303" key="7">
    <source>
    </source>
</evidence>
<evidence type="ECO:0000305" key="8"/>
<evidence type="ECO:0000305" key="9">
    <source>
    </source>
</evidence>
<gene>
    <name type="primary">SV2B</name>
    <name type="synonym">KIAA0735</name>
</gene>
<organism>
    <name type="scientific">Homo sapiens</name>
    <name type="common">Human</name>
    <dbReference type="NCBI Taxonomy" id="9606"/>
    <lineage>
        <taxon>Eukaryota</taxon>
        <taxon>Metazoa</taxon>
        <taxon>Chordata</taxon>
        <taxon>Craniata</taxon>
        <taxon>Vertebrata</taxon>
        <taxon>Euteleostomi</taxon>
        <taxon>Mammalia</taxon>
        <taxon>Eutheria</taxon>
        <taxon>Euarchontoglires</taxon>
        <taxon>Primates</taxon>
        <taxon>Haplorrhini</taxon>
        <taxon>Catarrhini</taxon>
        <taxon>Hominidae</taxon>
        <taxon>Homo</taxon>
    </lineage>
</organism>
<proteinExistence type="evidence at protein level"/>
<protein>
    <recommendedName>
        <fullName>Synaptic vesicle glycoprotein 2B</fullName>
    </recommendedName>
</protein>
<keyword id="KW-0002">3D-structure</keyword>
<keyword id="KW-0025">Alternative splicing</keyword>
<keyword id="KW-0968">Cytoplasmic vesicle</keyword>
<keyword id="KW-0325">Glycoprotein</keyword>
<keyword id="KW-0472">Membrane</keyword>
<keyword id="KW-0532">Neurotransmitter transport</keyword>
<keyword id="KW-0597">Phosphoprotein</keyword>
<keyword id="KW-1267">Proteomics identification</keyword>
<keyword id="KW-1185">Reference proteome</keyword>
<keyword id="KW-0770">Synapse</keyword>
<keyword id="KW-0812">Transmembrane</keyword>
<keyword id="KW-1133">Transmembrane helix</keyword>
<keyword id="KW-0813">Transport</keyword>